<sequence>MKPSWLQCRKVTGAGTLGAPLPGSPSVRGAGVARRALVAGFGGRGCRALTTSSGGGEYKTHFAASVADPERFWGKAAEQISWYKPWTKTLENRYPPSTSWFVEGMLNICYNAIDRHIENGQGDKIAIIYDSPVTDTKATISYKEVLEQVSKLAGVLVKQGVKKGDTVVIYMPMIPQAIYAMLACARIGAIHSLIFGGFASKELSTRIDHVKPKVVVTASFGIEPGRKVEYMPLLEEALRIGQHKPDRLLIYNRPNMEKVPLMSGRDLDWEEEMAKAQSHDCVPVLSEHPLYILYTSGTTGLPKGVVRPTGGYAVMLNWTMSSIYGLKPGEVWWAASDLGWVVGHSYICYGPLLHGNTTVLYEGKPVGTPDAGAYFRVLAEHGVAALFTAPTAIRAIRQQDPGAALGKQYSLTRFKTLFVAGERCDVETLEWSKKVFRVPVLDHWWQTETGSPITASCIGLGNSKTPPPGQAGKCVPGYNVMILDDNMQKLKARSLGNIVVKLPLPPGAFSGLWKNQEAFKHLYFEKFPGYYDTMDAGYMDEEGYLYVMSRVDDVINVAGHRISAGAIEESVLSHGTVTDCAVVGKEDPLKGHVPLALCVLKKDVNATEEQVLEEIVKHVRQSIGPVAAFRNAVFVKQLPKTRSGKIPRSTLSALVNGKPYKVTPTIEDPSIFGHIEEVLKQAL</sequence>
<reference key="1">
    <citation type="journal article" date="2004" name="Nature">
        <title>Genome sequence of the Brown Norway rat yields insights into mammalian evolution.</title>
        <authorList>
            <person name="Gibbs R.A."/>
            <person name="Weinstock G.M."/>
            <person name="Metzker M.L."/>
            <person name="Muzny D.M."/>
            <person name="Sodergren E.J."/>
            <person name="Scherer S."/>
            <person name="Scott G."/>
            <person name="Steffen D."/>
            <person name="Worley K.C."/>
            <person name="Burch P.E."/>
            <person name="Okwuonu G."/>
            <person name="Hines S."/>
            <person name="Lewis L."/>
            <person name="Deramo C."/>
            <person name="Delgado O."/>
            <person name="Dugan-Rocha S."/>
            <person name="Miner G."/>
            <person name="Morgan M."/>
            <person name="Hawes A."/>
            <person name="Gill R."/>
            <person name="Holt R.A."/>
            <person name="Adams M.D."/>
            <person name="Amanatides P.G."/>
            <person name="Baden-Tillson H."/>
            <person name="Barnstead M."/>
            <person name="Chin S."/>
            <person name="Evans C.A."/>
            <person name="Ferriera S."/>
            <person name="Fosler C."/>
            <person name="Glodek A."/>
            <person name="Gu Z."/>
            <person name="Jennings D."/>
            <person name="Kraft C.L."/>
            <person name="Nguyen T."/>
            <person name="Pfannkoch C.M."/>
            <person name="Sitter C."/>
            <person name="Sutton G.G."/>
            <person name="Venter J.C."/>
            <person name="Woodage T."/>
            <person name="Smith D."/>
            <person name="Lee H.-M."/>
            <person name="Gustafson E."/>
            <person name="Cahill P."/>
            <person name="Kana A."/>
            <person name="Doucette-Stamm L."/>
            <person name="Weinstock K."/>
            <person name="Fechtel K."/>
            <person name="Weiss R.B."/>
            <person name="Dunn D.M."/>
            <person name="Green E.D."/>
            <person name="Blakesley R.W."/>
            <person name="Bouffard G.G."/>
            <person name="De Jong P.J."/>
            <person name="Osoegawa K."/>
            <person name="Zhu B."/>
            <person name="Marra M."/>
            <person name="Schein J."/>
            <person name="Bosdet I."/>
            <person name="Fjell C."/>
            <person name="Jones S."/>
            <person name="Krzywinski M."/>
            <person name="Mathewson C."/>
            <person name="Siddiqui A."/>
            <person name="Wye N."/>
            <person name="McPherson J."/>
            <person name="Zhao S."/>
            <person name="Fraser C.M."/>
            <person name="Shetty J."/>
            <person name="Shatsman S."/>
            <person name="Geer K."/>
            <person name="Chen Y."/>
            <person name="Abramzon S."/>
            <person name="Nierman W.C."/>
            <person name="Havlak P.H."/>
            <person name="Chen R."/>
            <person name="Durbin K.J."/>
            <person name="Egan A."/>
            <person name="Ren Y."/>
            <person name="Song X.-Z."/>
            <person name="Li B."/>
            <person name="Liu Y."/>
            <person name="Qin X."/>
            <person name="Cawley S."/>
            <person name="Cooney A.J."/>
            <person name="D'Souza L.M."/>
            <person name="Martin K."/>
            <person name="Wu J.Q."/>
            <person name="Gonzalez-Garay M.L."/>
            <person name="Jackson A.R."/>
            <person name="Kalafus K.J."/>
            <person name="McLeod M.P."/>
            <person name="Milosavljevic A."/>
            <person name="Virk D."/>
            <person name="Volkov A."/>
            <person name="Wheeler D.A."/>
            <person name="Zhang Z."/>
            <person name="Bailey J.A."/>
            <person name="Eichler E.E."/>
            <person name="Tuzun E."/>
            <person name="Birney E."/>
            <person name="Mongin E."/>
            <person name="Ureta-Vidal A."/>
            <person name="Woodwark C."/>
            <person name="Zdobnov E."/>
            <person name="Bork P."/>
            <person name="Suyama M."/>
            <person name="Torrents D."/>
            <person name="Alexandersson M."/>
            <person name="Trask B.J."/>
            <person name="Young J.M."/>
            <person name="Huang H."/>
            <person name="Wang H."/>
            <person name="Xing H."/>
            <person name="Daniels S."/>
            <person name="Gietzen D."/>
            <person name="Schmidt J."/>
            <person name="Stevens K."/>
            <person name="Vitt U."/>
            <person name="Wingrove J."/>
            <person name="Camara F."/>
            <person name="Mar Alba M."/>
            <person name="Abril J.F."/>
            <person name="Guigo R."/>
            <person name="Smit A."/>
            <person name="Dubchak I."/>
            <person name="Rubin E.M."/>
            <person name="Couronne O."/>
            <person name="Poliakov A."/>
            <person name="Huebner N."/>
            <person name="Ganten D."/>
            <person name="Goesele C."/>
            <person name="Hummel O."/>
            <person name="Kreitler T."/>
            <person name="Lee Y.-A."/>
            <person name="Monti J."/>
            <person name="Schulz H."/>
            <person name="Zimdahl H."/>
            <person name="Himmelbauer H."/>
            <person name="Lehrach H."/>
            <person name="Jacob H.J."/>
            <person name="Bromberg S."/>
            <person name="Gullings-Handley J."/>
            <person name="Jensen-Seaman M.I."/>
            <person name="Kwitek A.E."/>
            <person name="Lazar J."/>
            <person name="Pasko D."/>
            <person name="Tonellato P.J."/>
            <person name="Twigger S."/>
            <person name="Ponting C.P."/>
            <person name="Duarte J.M."/>
            <person name="Rice S."/>
            <person name="Goodstadt L."/>
            <person name="Beatson S.A."/>
            <person name="Emes R.D."/>
            <person name="Winter E.E."/>
            <person name="Webber C."/>
            <person name="Brandt P."/>
            <person name="Nyakatura G."/>
            <person name="Adetobi M."/>
            <person name="Chiaromonte F."/>
            <person name="Elnitski L."/>
            <person name="Eswara P."/>
            <person name="Hardison R.C."/>
            <person name="Hou M."/>
            <person name="Kolbe D."/>
            <person name="Makova K."/>
            <person name="Miller W."/>
            <person name="Nekrutenko A."/>
            <person name="Riemer C."/>
            <person name="Schwartz S."/>
            <person name="Taylor J."/>
            <person name="Yang S."/>
            <person name="Zhang Y."/>
            <person name="Lindpaintner K."/>
            <person name="Andrews T.D."/>
            <person name="Caccamo M."/>
            <person name="Clamp M."/>
            <person name="Clarke L."/>
            <person name="Curwen V."/>
            <person name="Durbin R.M."/>
            <person name="Eyras E."/>
            <person name="Searle S.M."/>
            <person name="Cooper G.M."/>
            <person name="Batzoglou S."/>
            <person name="Brudno M."/>
            <person name="Sidow A."/>
            <person name="Stone E.A."/>
            <person name="Payseur B.A."/>
            <person name="Bourque G."/>
            <person name="Lopez-Otin C."/>
            <person name="Puente X.S."/>
            <person name="Chakrabarti K."/>
            <person name="Chatterji S."/>
            <person name="Dewey C."/>
            <person name="Pachter L."/>
            <person name="Bray N."/>
            <person name="Yap V.B."/>
            <person name="Caspi A."/>
            <person name="Tesler G."/>
            <person name="Pevzner P.A."/>
            <person name="Haussler D."/>
            <person name="Roskin K.M."/>
            <person name="Baertsch R."/>
            <person name="Clawson H."/>
            <person name="Furey T.S."/>
            <person name="Hinrichs A.S."/>
            <person name="Karolchik D."/>
            <person name="Kent W.J."/>
            <person name="Rosenbloom K.R."/>
            <person name="Trumbower H."/>
            <person name="Weirauch M."/>
            <person name="Cooper D.N."/>
            <person name="Stenson P.D."/>
            <person name="Ma B."/>
            <person name="Brent M."/>
            <person name="Arumugam M."/>
            <person name="Shteynberg D."/>
            <person name="Copley R.R."/>
            <person name="Taylor M.S."/>
            <person name="Riethman H."/>
            <person name="Mudunuri U."/>
            <person name="Peterson J."/>
            <person name="Guyer M."/>
            <person name="Felsenfeld A."/>
            <person name="Old S."/>
            <person name="Mockrin S."/>
            <person name="Collins F.S."/>
        </authorList>
    </citation>
    <scope>NUCLEOTIDE SEQUENCE [LARGE SCALE GENOMIC DNA]</scope>
    <source>
        <strain>Brown Norway</strain>
    </source>
</reference>
<reference key="2">
    <citation type="submission" date="2005-09" db="EMBL/GenBank/DDBJ databases">
        <authorList>
            <person name="Mural R.J."/>
            <person name="Adams M.D."/>
            <person name="Myers E.W."/>
            <person name="Smith H.O."/>
            <person name="Venter J.C."/>
        </authorList>
    </citation>
    <scope>NUCLEOTIDE SEQUENCE [LARGE SCALE GENOMIC DNA]</scope>
    <source>
        <strain>Brown Norway</strain>
    </source>
</reference>
<reference key="3">
    <citation type="journal article" date="2017" name="J. Biochem.">
        <title>Molecular cloning of rat acss3 and characterization of mammalian propionyl-CoA synthetase in the liver mitochondrial matrix.</title>
        <authorList>
            <person name="Yoshimura Y."/>
            <person name="Araki A."/>
            <person name="Maruta H."/>
            <person name="Takahashi Y."/>
            <person name="Yamashita H."/>
        </authorList>
    </citation>
    <scope>FUNCTION</scope>
    <scope>CATALYTIC ACTIVITY</scope>
    <scope>TISSUE SPECIFICITY</scope>
    <scope>BIOPHYSICOCHEMICAL PROPERTIES</scope>
    <scope>SUBCELLULAR LOCATION</scope>
    <scope>INDUCTION</scope>
</reference>
<keyword id="KW-0007">Acetylation</keyword>
<keyword id="KW-0067">ATP-binding</keyword>
<keyword id="KW-0436">Ligase</keyword>
<keyword id="KW-0443">Lipid metabolism</keyword>
<keyword id="KW-0496">Mitochondrion</keyword>
<keyword id="KW-0547">Nucleotide-binding</keyword>
<keyword id="KW-1185">Reference proteome</keyword>
<keyword id="KW-0809">Transit peptide</keyword>
<name>ACSS3_RAT</name>
<protein>
    <recommendedName>
        <fullName>Acyl-CoA synthetase short-chain family member 3, mitochondrial</fullName>
        <ecNumber evidence="4">6.2.1.1</ecNumber>
    </recommendedName>
    <alternativeName>
        <fullName>Acetate--CoA ligase 3</fullName>
    </alternativeName>
    <alternativeName>
        <fullName>Acyl-CoA synthetase short-chain family member 3</fullName>
    </alternativeName>
    <alternativeName>
        <fullName>Propionate--CoA ligase</fullName>
        <ecNumber evidence="4">6.2.1.17</ecNumber>
    </alternativeName>
</protein>
<dbReference type="EC" id="6.2.1.1" evidence="4"/>
<dbReference type="EC" id="6.2.1.17" evidence="4"/>
<dbReference type="EMBL" id="AABR07056959">
    <property type="status" value="NOT_ANNOTATED_CDS"/>
    <property type="molecule type" value="Genomic_DNA"/>
</dbReference>
<dbReference type="EMBL" id="AABR07056960">
    <property type="status" value="NOT_ANNOTATED_CDS"/>
    <property type="molecule type" value="Genomic_DNA"/>
</dbReference>
<dbReference type="EMBL" id="AABR07056961">
    <property type="status" value="NOT_ANNOTATED_CDS"/>
    <property type="molecule type" value="Genomic_DNA"/>
</dbReference>
<dbReference type="EMBL" id="CH473960">
    <property type="protein sequence ID" value="EDM16777.1"/>
    <property type="molecule type" value="Genomic_DNA"/>
</dbReference>
<dbReference type="RefSeq" id="NP_001401870.1">
    <property type="nucleotide sequence ID" value="NM_001414941.1"/>
</dbReference>
<dbReference type="RefSeq" id="XP_006241364.1">
    <property type="nucleotide sequence ID" value="XM_006241302.3"/>
</dbReference>
<dbReference type="SMR" id="A0A0G2K047"/>
<dbReference type="FunCoup" id="A0A0G2K047">
    <property type="interactions" value="186"/>
</dbReference>
<dbReference type="IntAct" id="A0A0G2K047">
    <property type="interactions" value="1"/>
</dbReference>
<dbReference type="STRING" id="10116.ENSRNOP00000071300"/>
<dbReference type="SwissLipids" id="SLP:000001690"/>
<dbReference type="PhosphoSitePlus" id="A0A0G2K047"/>
<dbReference type="PaxDb" id="10116-ENSRNOP00000062459"/>
<dbReference type="Ensembl" id="ENSRNOT00000082141.2">
    <property type="protein sequence ID" value="ENSRNOP00000071300.1"/>
    <property type="gene ID" value="ENSRNOG00000004448.8"/>
</dbReference>
<dbReference type="GeneID" id="314800"/>
<dbReference type="AGR" id="RGD:1307051"/>
<dbReference type="RGD" id="1307051">
    <property type="gene designation" value="Acss3"/>
</dbReference>
<dbReference type="GeneTree" id="ENSGT00940000157479"/>
<dbReference type="InParanoid" id="A0A0G2K047"/>
<dbReference type="OMA" id="FIMGRTD"/>
<dbReference type="OrthoDB" id="10253869at2759"/>
<dbReference type="BRENDA" id="6.2.1.17">
    <property type="organism ID" value="5301"/>
</dbReference>
<dbReference type="Reactome" id="R-RNO-77111">
    <property type="pathway name" value="Synthesis of Ketone Bodies"/>
</dbReference>
<dbReference type="PRO" id="PR:A0A0G2K047"/>
<dbReference type="Proteomes" id="UP000002494">
    <property type="component" value="Chromosome 7"/>
</dbReference>
<dbReference type="Proteomes" id="UP000234681">
    <property type="component" value="Chromosome 7"/>
</dbReference>
<dbReference type="Bgee" id="ENSRNOG00000004448">
    <property type="expression patterns" value="Expressed in liver and 18 other cell types or tissues"/>
</dbReference>
<dbReference type="ExpressionAtlas" id="A0A0G2K047">
    <property type="expression patterns" value="baseline and differential"/>
</dbReference>
<dbReference type="GO" id="GO:0005759">
    <property type="term" value="C:mitochondrial matrix"/>
    <property type="evidence" value="ECO:0000314"/>
    <property type="project" value="UniProtKB"/>
</dbReference>
<dbReference type="GO" id="GO:0003987">
    <property type="term" value="F:acetate-CoA ligase activity"/>
    <property type="evidence" value="ECO:0000314"/>
    <property type="project" value="UniProtKB"/>
</dbReference>
<dbReference type="GO" id="GO:0005524">
    <property type="term" value="F:ATP binding"/>
    <property type="evidence" value="ECO:0007669"/>
    <property type="project" value="UniProtKB-KW"/>
</dbReference>
<dbReference type="GO" id="GO:0031956">
    <property type="term" value="F:medium-chain fatty acid-CoA ligase activity"/>
    <property type="evidence" value="ECO:0000314"/>
    <property type="project" value="UniProtKB"/>
</dbReference>
<dbReference type="GO" id="GO:0050218">
    <property type="term" value="F:propionate-CoA ligase activity"/>
    <property type="evidence" value="ECO:0000314"/>
    <property type="project" value="UniProtKB"/>
</dbReference>
<dbReference type="GO" id="GO:0006629">
    <property type="term" value="P:lipid metabolic process"/>
    <property type="evidence" value="ECO:0007669"/>
    <property type="project" value="UniProtKB-KW"/>
</dbReference>
<dbReference type="CDD" id="cd05967">
    <property type="entry name" value="PrpE"/>
    <property type="match status" value="1"/>
</dbReference>
<dbReference type="FunFam" id="3.40.50.12780:FF:000011">
    <property type="entry name" value="Acetyl-coenzyme A synthetase 2-like, mitochondrial"/>
    <property type="match status" value="1"/>
</dbReference>
<dbReference type="FunFam" id="3.30.300.30:FF:000017">
    <property type="entry name" value="Acyl-CoA synthetase short-chain family member 3"/>
    <property type="match status" value="1"/>
</dbReference>
<dbReference type="Gene3D" id="3.30.300.30">
    <property type="match status" value="1"/>
</dbReference>
<dbReference type="Gene3D" id="3.40.50.12780">
    <property type="entry name" value="N-terminal domain of ligase-like"/>
    <property type="match status" value="1"/>
</dbReference>
<dbReference type="InterPro" id="IPR032387">
    <property type="entry name" value="ACAS_N"/>
</dbReference>
<dbReference type="InterPro" id="IPR025110">
    <property type="entry name" value="AMP-bd_C"/>
</dbReference>
<dbReference type="InterPro" id="IPR045851">
    <property type="entry name" value="AMP-bd_C_sf"/>
</dbReference>
<dbReference type="InterPro" id="IPR020845">
    <property type="entry name" value="AMP-binding_CS"/>
</dbReference>
<dbReference type="InterPro" id="IPR000873">
    <property type="entry name" value="AMP-dep_synth/lig_dom"/>
</dbReference>
<dbReference type="InterPro" id="IPR042099">
    <property type="entry name" value="ANL_N_sf"/>
</dbReference>
<dbReference type="PANTHER" id="PTHR43347">
    <property type="entry name" value="ACYL-COA SYNTHETASE"/>
    <property type="match status" value="1"/>
</dbReference>
<dbReference type="PANTHER" id="PTHR43347:SF3">
    <property type="entry name" value="ACYL-COA SYNTHETASE SHORT-CHAIN FAMILY MEMBER 3, MITOCHONDRIAL"/>
    <property type="match status" value="1"/>
</dbReference>
<dbReference type="Pfam" id="PF16177">
    <property type="entry name" value="ACAS_N"/>
    <property type="match status" value="1"/>
</dbReference>
<dbReference type="Pfam" id="PF00501">
    <property type="entry name" value="AMP-binding"/>
    <property type="match status" value="1"/>
</dbReference>
<dbReference type="Pfam" id="PF13193">
    <property type="entry name" value="AMP-binding_C"/>
    <property type="match status" value="1"/>
</dbReference>
<dbReference type="SUPFAM" id="SSF56801">
    <property type="entry name" value="Acetyl-CoA synthetase-like"/>
    <property type="match status" value="1"/>
</dbReference>
<dbReference type="PROSITE" id="PS00455">
    <property type="entry name" value="AMP_BINDING"/>
    <property type="match status" value="1"/>
</dbReference>
<comment type="function">
    <text evidence="4">Catalyzes the synthesis of acetyl-CoA from short-chain fatty acids (PubMed:28003429). Propionate is the preferred substrate but can also utilize acetate and butyrate with a much lower affinity (PubMed:28003429).</text>
</comment>
<comment type="catalytic activity">
    <reaction evidence="4">
        <text>acetate + ATP + CoA = acetyl-CoA + AMP + diphosphate</text>
        <dbReference type="Rhea" id="RHEA:23176"/>
        <dbReference type="ChEBI" id="CHEBI:30089"/>
        <dbReference type="ChEBI" id="CHEBI:30616"/>
        <dbReference type="ChEBI" id="CHEBI:33019"/>
        <dbReference type="ChEBI" id="CHEBI:57287"/>
        <dbReference type="ChEBI" id="CHEBI:57288"/>
        <dbReference type="ChEBI" id="CHEBI:456215"/>
        <dbReference type="EC" id="6.2.1.1"/>
    </reaction>
    <physiologicalReaction direction="left-to-right" evidence="6">
        <dbReference type="Rhea" id="RHEA:23177"/>
    </physiologicalReaction>
</comment>
<comment type="catalytic activity">
    <reaction evidence="4">
        <text>propanoate + ATP + CoA = propanoyl-CoA + AMP + diphosphate</text>
        <dbReference type="Rhea" id="RHEA:20373"/>
        <dbReference type="ChEBI" id="CHEBI:17272"/>
        <dbReference type="ChEBI" id="CHEBI:30616"/>
        <dbReference type="ChEBI" id="CHEBI:33019"/>
        <dbReference type="ChEBI" id="CHEBI:57287"/>
        <dbReference type="ChEBI" id="CHEBI:57392"/>
        <dbReference type="ChEBI" id="CHEBI:456215"/>
        <dbReference type="EC" id="6.2.1.17"/>
    </reaction>
    <physiologicalReaction direction="left-to-right" evidence="6">
        <dbReference type="Rhea" id="RHEA:20374"/>
    </physiologicalReaction>
</comment>
<comment type="catalytic activity">
    <reaction evidence="4">
        <text>butanoate + ATP + CoA = butanoyl-CoA + AMP + diphosphate</text>
        <dbReference type="Rhea" id="RHEA:46172"/>
        <dbReference type="ChEBI" id="CHEBI:17968"/>
        <dbReference type="ChEBI" id="CHEBI:30616"/>
        <dbReference type="ChEBI" id="CHEBI:33019"/>
        <dbReference type="ChEBI" id="CHEBI:57287"/>
        <dbReference type="ChEBI" id="CHEBI:57371"/>
        <dbReference type="ChEBI" id="CHEBI:456215"/>
    </reaction>
    <physiologicalReaction direction="left-to-right" evidence="6">
        <dbReference type="Rhea" id="RHEA:46173"/>
    </physiologicalReaction>
</comment>
<comment type="biophysicochemical properties">
    <kinetics>
        <KM evidence="4">5.4 mM for acetate</KM>
        <KM evidence="4">3.7 mM for butyrate</KM>
        <KM evidence="4">0.19 mM for propionate</KM>
    </kinetics>
</comment>
<comment type="subcellular location">
    <subcellularLocation>
        <location evidence="4">Mitochondrion matrix</location>
    </subcellularLocation>
</comment>
<comment type="tissue specificity">
    <text evidence="4">Expressed in a wide range of tissues, with the highest levels observed in the liver followed by kidney.</text>
</comment>
<comment type="induction">
    <text evidence="4">Expression is up-regulated by fasting.</text>
</comment>
<comment type="similarity">
    <text evidence="5">Belongs to the ATP-dependent AMP-binding enzyme family.</text>
</comment>
<proteinExistence type="evidence at protein level"/>
<gene>
    <name type="primary">Acss3</name>
</gene>
<evidence type="ECO:0000250" key="1"/>
<evidence type="ECO:0000250" key="2">
    <source>
        <dbReference type="UniProtKB" id="Q14DH7"/>
    </source>
</evidence>
<evidence type="ECO:0000255" key="3"/>
<evidence type="ECO:0000269" key="4">
    <source>
    </source>
</evidence>
<evidence type="ECO:0000305" key="5"/>
<evidence type="ECO:0000305" key="6">
    <source>
    </source>
</evidence>
<feature type="transit peptide" description="Mitochondrion" evidence="3">
    <location>
        <begin position="1"/>
        <end position="29"/>
    </location>
</feature>
<feature type="chain" id="PRO_0000447679" description="Acyl-CoA synthetase short-chain family member 3, mitochondrial">
    <location>
        <begin position="30"/>
        <end position="683"/>
    </location>
</feature>
<feature type="binding site" evidence="1">
    <location>
        <begin position="223"/>
        <end position="226"/>
    </location>
    <ligand>
        <name>CoA</name>
        <dbReference type="ChEBI" id="CHEBI:57287"/>
    </ligand>
</feature>
<feature type="binding site" evidence="1">
    <location>
        <begin position="421"/>
        <end position="423"/>
    </location>
    <ligand>
        <name>ATP</name>
        <dbReference type="ChEBI" id="CHEBI:30616"/>
    </ligand>
</feature>
<feature type="binding site" evidence="1">
    <location>
        <begin position="442"/>
        <end position="447"/>
    </location>
    <ligand>
        <name>ATP</name>
        <dbReference type="ChEBI" id="CHEBI:30616"/>
    </ligand>
</feature>
<feature type="binding site" evidence="1">
    <location>
        <position position="535"/>
    </location>
    <ligand>
        <name>ATP</name>
        <dbReference type="ChEBI" id="CHEBI:30616"/>
    </ligand>
</feature>
<feature type="binding site" evidence="1">
    <location>
        <position position="550"/>
    </location>
    <ligand>
        <name>ATP</name>
        <dbReference type="ChEBI" id="CHEBI:30616"/>
    </ligand>
</feature>
<feature type="binding site" evidence="1">
    <location>
        <position position="561"/>
    </location>
    <ligand>
        <name>ATP</name>
        <dbReference type="ChEBI" id="CHEBI:30616"/>
    </ligand>
</feature>
<feature type="binding site" evidence="1">
    <location>
        <position position="620"/>
    </location>
    <ligand>
        <name>CoA</name>
        <dbReference type="ChEBI" id="CHEBI:57287"/>
    </ligand>
</feature>
<feature type="modified residue" description="N6-succinyllysine" evidence="2">
    <location>
        <position position="514"/>
    </location>
</feature>
<feature type="modified residue" description="N6-acetyllysine" evidence="2">
    <location>
        <position position="520"/>
    </location>
</feature>
<organism>
    <name type="scientific">Rattus norvegicus</name>
    <name type="common">Rat</name>
    <dbReference type="NCBI Taxonomy" id="10116"/>
    <lineage>
        <taxon>Eukaryota</taxon>
        <taxon>Metazoa</taxon>
        <taxon>Chordata</taxon>
        <taxon>Craniata</taxon>
        <taxon>Vertebrata</taxon>
        <taxon>Euteleostomi</taxon>
        <taxon>Mammalia</taxon>
        <taxon>Eutheria</taxon>
        <taxon>Euarchontoglires</taxon>
        <taxon>Glires</taxon>
        <taxon>Rodentia</taxon>
        <taxon>Myomorpha</taxon>
        <taxon>Muroidea</taxon>
        <taxon>Muridae</taxon>
        <taxon>Murinae</taxon>
        <taxon>Rattus</taxon>
    </lineage>
</organism>
<accession>A0A0G2K047</accession>